<name>MPC1_YEAST</name>
<gene>
    <name evidence="8 9" type="primary">MPC1</name>
    <name evidence="7" type="synonym">FMP37</name>
    <name evidence="11" type="ordered locus">YGL080W</name>
</gene>
<feature type="chain" id="PRO_0000212805" description="Mitochondrial pyruvate carrier 1">
    <location>
        <begin position="1"/>
        <end position="130"/>
    </location>
</feature>
<feature type="transmembrane region" description="Helical" evidence="1">
    <location>
        <begin position="23"/>
        <end position="45"/>
    </location>
</feature>
<feature type="transmembrane region" description="Helical" evidence="1">
    <location>
        <begin position="55"/>
        <end position="77"/>
    </location>
</feature>
<sequence length="130" mass="14995">MSQPVQRAAARSFLQKYINKETLKYIFTTHFWGPVSNFGIPIAAIYDLKKDPTLISGPMTFALVTYSGVFMKYALSVSPKNYLLFGCHLINETAQLAQGYRFLKYTYFTTDEEKKALDKEWKEKEKTGKQ</sequence>
<organism>
    <name type="scientific">Saccharomyces cerevisiae (strain ATCC 204508 / S288c)</name>
    <name type="common">Baker's yeast</name>
    <dbReference type="NCBI Taxonomy" id="559292"/>
    <lineage>
        <taxon>Eukaryota</taxon>
        <taxon>Fungi</taxon>
        <taxon>Dikarya</taxon>
        <taxon>Ascomycota</taxon>
        <taxon>Saccharomycotina</taxon>
        <taxon>Saccharomycetes</taxon>
        <taxon>Saccharomycetales</taxon>
        <taxon>Saccharomycetaceae</taxon>
        <taxon>Saccharomyces</taxon>
    </lineage>
</organism>
<dbReference type="EMBL" id="Z72602">
    <property type="protein sequence ID" value="CAA96785.1"/>
    <property type="molecule type" value="Genomic_DNA"/>
</dbReference>
<dbReference type="EMBL" id="AY558486">
    <property type="protein sequence ID" value="AAS56812.1"/>
    <property type="molecule type" value="Genomic_DNA"/>
</dbReference>
<dbReference type="EMBL" id="BK006941">
    <property type="protein sequence ID" value="DAA08025.1"/>
    <property type="molecule type" value="Genomic_DNA"/>
</dbReference>
<dbReference type="PIR" id="S64087">
    <property type="entry name" value="S64087"/>
</dbReference>
<dbReference type="RefSeq" id="NP_011435.1">
    <property type="nucleotide sequence ID" value="NM_001180945.1"/>
</dbReference>
<dbReference type="BioGRID" id="33170">
    <property type="interactions" value="139"/>
</dbReference>
<dbReference type="ComplexPortal" id="CPX-302">
    <property type="entry name" value="Mitochondrial pyruvate carrier, fermentative isoform"/>
</dbReference>
<dbReference type="ComplexPortal" id="CPX-303">
    <property type="entry name" value="Mitochondrial pyruvate carrier, respiratory isoform"/>
</dbReference>
<dbReference type="DIP" id="DIP-8020N"/>
<dbReference type="FunCoup" id="P53157">
    <property type="interactions" value="584"/>
</dbReference>
<dbReference type="IntAct" id="P53157">
    <property type="interactions" value="6"/>
</dbReference>
<dbReference type="STRING" id="4932.YGL080W"/>
<dbReference type="TCDB" id="2.A.105.1.1">
    <property type="family name" value="the mitochondrial pyruvate carrier (mpc) family"/>
</dbReference>
<dbReference type="PaxDb" id="4932-YGL080W"/>
<dbReference type="PeptideAtlas" id="P53157"/>
<dbReference type="EnsemblFungi" id="YGL080W_mRNA">
    <property type="protein sequence ID" value="YGL080W"/>
    <property type="gene ID" value="YGL080W"/>
</dbReference>
<dbReference type="GeneID" id="852800"/>
<dbReference type="KEGG" id="sce:YGL080W"/>
<dbReference type="AGR" id="SGD:S000003048"/>
<dbReference type="SGD" id="S000003048">
    <property type="gene designation" value="MPC1"/>
</dbReference>
<dbReference type="VEuPathDB" id="FungiDB:YGL080W"/>
<dbReference type="eggNOG" id="KOG1590">
    <property type="taxonomic scope" value="Eukaryota"/>
</dbReference>
<dbReference type="GeneTree" id="ENSGT00940000171651"/>
<dbReference type="HOGENOM" id="CLU_099502_3_2_1"/>
<dbReference type="InParanoid" id="P53157"/>
<dbReference type="OMA" id="CTTHFWG"/>
<dbReference type="OrthoDB" id="1697690at2759"/>
<dbReference type="BioCyc" id="YEAST:G3O-30581-MONOMER"/>
<dbReference type="BioGRID-ORCS" id="852800">
    <property type="hits" value="0 hits in 10 CRISPR screens"/>
</dbReference>
<dbReference type="PRO" id="PR:P53157"/>
<dbReference type="Proteomes" id="UP000002311">
    <property type="component" value="Chromosome VII"/>
</dbReference>
<dbReference type="RNAct" id="P53157">
    <property type="molecule type" value="protein"/>
</dbReference>
<dbReference type="GO" id="GO:0098800">
    <property type="term" value="C:inner mitochondrial membrane protein complex"/>
    <property type="evidence" value="ECO:0000314"/>
    <property type="project" value="ComplexPortal"/>
</dbReference>
<dbReference type="GO" id="GO:0005743">
    <property type="term" value="C:mitochondrial inner membrane"/>
    <property type="evidence" value="ECO:0000314"/>
    <property type="project" value="SGD"/>
</dbReference>
<dbReference type="GO" id="GO:0005739">
    <property type="term" value="C:mitochondrion"/>
    <property type="evidence" value="ECO:0007005"/>
    <property type="project" value="SGD"/>
</dbReference>
<dbReference type="GO" id="GO:0050833">
    <property type="term" value="F:pyruvate transmembrane transporter activity"/>
    <property type="evidence" value="ECO:0000314"/>
    <property type="project" value="SGD"/>
</dbReference>
<dbReference type="GO" id="GO:0006850">
    <property type="term" value="P:mitochondrial pyruvate transmembrane transport"/>
    <property type="evidence" value="ECO:0000314"/>
    <property type="project" value="ComplexPortal"/>
</dbReference>
<dbReference type="InterPro" id="IPR005336">
    <property type="entry name" value="MPC"/>
</dbReference>
<dbReference type="PANTHER" id="PTHR14154">
    <property type="entry name" value="UPF0041 BRAIN PROTEIN 44-RELATED"/>
    <property type="match status" value="1"/>
</dbReference>
<dbReference type="Pfam" id="PF03650">
    <property type="entry name" value="MPC"/>
    <property type="match status" value="1"/>
</dbReference>
<proteinExistence type="evidence at protein level"/>
<reference key="1">
    <citation type="journal article" date="1997" name="Yeast">
        <title>Sequence analysis of 203 kilobases from Saccharomyces cerevisiae chromosome VII.</title>
        <authorList>
            <person name="Rieger M."/>
            <person name="Brueckner M."/>
            <person name="Schaefer M."/>
            <person name="Mueller-Auer S."/>
        </authorList>
    </citation>
    <scope>NUCLEOTIDE SEQUENCE [GENOMIC DNA]</scope>
    <source>
        <strain>ATCC 204508 / S288c</strain>
    </source>
</reference>
<reference key="2">
    <citation type="journal article" date="1997" name="Nature">
        <title>The nucleotide sequence of Saccharomyces cerevisiae chromosome VII.</title>
        <authorList>
            <person name="Tettelin H."/>
            <person name="Agostoni-Carbone M.L."/>
            <person name="Albermann K."/>
            <person name="Albers M."/>
            <person name="Arroyo J."/>
            <person name="Backes U."/>
            <person name="Barreiros T."/>
            <person name="Bertani I."/>
            <person name="Bjourson A.J."/>
            <person name="Brueckner M."/>
            <person name="Bruschi C.V."/>
            <person name="Carignani G."/>
            <person name="Castagnoli L."/>
            <person name="Cerdan E."/>
            <person name="Clemente M.L."/>
            <person name="Coblenz A."/>
            <person name="Coglievina M."/>
            <person name="Coissac E."/>
            <person name="Defoor E."/>
            <person name="Del Bino S."/>
            <person name="Delius H."/>
            <person name="Delneri D."/>
            <person name="de Wergifosse P."/>
            <person name="Dujon B."/>
            <person name="Durand P."/>
            <person name="Entian K.-D."/>
            <person name="Eraso P."/>
            <person name="Escribano V."/>
            <person name="Fabiani L."/>
            <person name="Fartmann B."/>
            <person name="Feroli F."/>
            <person name="Feuermann M."/>
            <person name="Frontali L."/>
            <person name="Garcia-Gonzalez M."/>
            <person name="Garcia-Saez M.I."/>
            <person name="Goffeau A."/>
            <person name="Guerreiro P."/>
            <person name="Hani J."/>
            <person name="Hansen M."/>
            <person name="Hebling U."/>
            <person name="Hernandez K."/>
            <person name="Heumann K."/>
            <person name="Hilger F."/>
            <person name="Hofmann B."/>
            <person name="Indge K.J."/>
            <person name="James C.M."/>
            <person name="Klima R."/>
            <person name="Koetter P."/>
            <person name="Kramer B."/>
            <person name="Kramer W."/>
            <person name="Lauquin G."/>
            <person name="Leuther H."/>
            <person name="Louis E.J."/>
            <person name="Maillier E."/>
            <person name="Marconi A."/>
            <person name="Martegani E."/>
            <person name="Mazon M.J."/>
            <person name="Mazzoni C."/>
            <person name="McReynolds A.D.K."/>
            <person name="Melchioretto P."/>
            <person name="Mewes H.-W."/>
            <person name="Minenkova O."/>
            <person name="Mueller-Auer S."/>
            <person name="Nawrocki A."/>
            <person name="Netter P."/>
            <person name="Neu R."/>
            <person name="Nombela C."/>
            <person name="Oliver S.G."/>
            <person name="Panzeri L."/>
            <person name="Paoluzi S."/>
            <person name="Plevani P."/>
            <person name="Portetelle D."/>
            <person name="Portillo F."/>
            <person name="Potier S."/>
            <person name="Purnelle B."/>
            <person name="Rieger M."/>
            <person name="Riles L."/>
            <person name="Rinaldi T."/>
            <person name="Robben J."/>
            <person name="Rodrigues-Pousada C."/>
            <person name="Rodriguez-Belmonte E."/>
            <person name="Rodriguez-Torres A.M."/>
            <person name="Rose M."/>
            <person name="Ruzzi M."/>
            <person name="Saliola M."/>
            <person name="Sanchez-Perez M."/>
            <person name="Schaefer B."/>
            <person name="Schaefer M."/>
            <person name="Scharfe M."/>
            <person name="Schmidheini T."/>
            <person name="Schreer A."/>
            <person name="Skala J."/>
            <person name="Souciet J.-L."/>
            <person name="Steensma H.Y."/>
            <person name="Talla E."/>
            <person name="Thierry A."/>
            <person name="Vandenbol M."/>
            <person name="van der Aart Q.J.M."/>
            <person name="Van Dyck L."/>
            <person name="Vanoni M."/>
            <person name="Verhasselt P."/>
            <person name="Voet M."/>
            <person name="Volckaert G."/>
            <person name="Wambutt R."/>
            <person name="Watson M.D."/>
            <person name="Weber N."/>
            <person name="Wedler E."/>
            <person name="Wedler H."/>
            <person name="Wipfli P."/>
            <person name="Wolf K."/>
            <person name="Wright L.F."/>
            <person name="Zaccaria P."/>
            <person name="Zimmermann M."/>
            <person name="Zollner A."/>
            <person name="Kleine K."/>
        </authorList>
    </citation>
    <scope>NUCLEOTIDE SEQUENCE [LARGE SCALE GENOMIC DNA]</scope>
    <source>
        <strain>ATCC 204508 / S288c</strain>
    </source>
</reference>
<reference key="3">
    <citation type="journal article" date="2014" name="G3 (Bethesda)">
        <title>The reference genome sequence of Saccharomyces cerevisiae: Then and now.</title>
        <authorList>
            <person name="Engel S.R."/>
            <person name="Dietrich F.S."/>
            <person name="Fisk D.G."/>
            <person name="Binkley G."/>
            <person name="Balakrishnan R."/>
            <person name="Costanzo M.C."/>
            <person name="Dwight S.S."/>
            <person name="Hitz B.C."/>
            <person name="Karra K."/>
            <person name="Nash R.S."/>
            <person name="Weng S."/>
            <person name="Wong E.D."/>
            <person name="Lloyd P."/>
            <person name="Skrzypek M.S."/>
            <person name="Miyasato S.R."/>
            <person name="Simison M."/>
            <person name="Cherry J.M."/>
        </authorList>
    </citation>
    <scope>GENOME REANNOTATION</scope>
    <source>
        <strain>ATCC 204508 / S288c</strain>
    </source>
</reference>
<reference key="4">
    <citation type="journal article" date="2007" name="Genome Res.">
        <title>Approaching a complete repository of sequence-verified protein-encoding clones for Saccharomyces cerevisiae.</title>
        <authorList>
            <person name="Hu Y."/>
            <person name="Rolfs A."/>
            <person name="Bhullar B."/>
            <person name="Murthy T.V.S."/>
            <person name="Zhu C."/>
            <person name="Berger M.F."/>
            <person name="Camargo A.A."/>
            <person name="Kelley F."/>
            <person name="McCarron S."/>
            <person name="Jepson D."/>
            <person name="Richardson A."/>
            <person name="Raphael J."/>
            <person name="Moreira D."/>
            <person name="Taycher E."/>
            <person name="Zuo D."/>
            <person name="Mohr S."/>
            <person name="Kane M.F."/>
            <person name="Williamson J."/>
            <person name="Simpson A.J.G."/>
            <person name="Bulyk M.L."/>
            <person name="Harlow E."/>
            <person name="Marsischky G."/>
            <person name="Kolodner R.D."/>
            <person name="LaBaer J."/>
        </authorList>
    </citation>
    <scope>NUCLEOTIDE SEQUENCE [GENOMIC DNA]</scope>
    <source>
        <strain>ATCC 204508 / S288c</strain>
    </source>
</reference>
<reference key="5">
    <citation type="journal article" date="2003" name="Nature">
        <title>Global analysis of protein localization in budding yeast.</title>
        <authorList>
            <person name="Huh W.-K."/>
            <person name="Falvo J.V."/>
            <person name="Gerke L.C."/>
            <person name="Carroll A.S."/>
            <person name="Howson R.W."/>
            <person name="Weissman J.S."/>
            <person name="O'Shea E.K."/>
        </authorList>
    </citation>
    <scope>SUBCELLULAR LOCATION [LARGE SCALE ANALYSIS]</scope>
</reference>
<reference key="6">
    <citation type="journal article" date="2003" name="Nature">
        <title>Global analysis of protein expression in yeast.</title>
        <authorList>
            <person name="Ghaemmaghami S."/>
            <person name="Huh W.-K."/>
            <person name="Bower K."/>
            <person name="Howson R.W."/>
            <person name="Belle A."/>
            <person name="Dephoure N."/>
            <person name="O'Shea E.K."/>
            <person name="Weissman J.S."/>
        </authorList>
    </citation>
    <scope>LEVEL OF PROTEIN EXPRESSION [LARGE SCALE ANALYSIS]</scope>
</reference>
<reference key="7">
    <citation type="journal article" date="2003" name="Proc. Natl. Acad. Sci. U.S.A.">
        <title>The proteome of Saccharomyces cerevisiae mitochondria.</title>
        <authorList>
            <person name="Sickmann A."/>
            <person name="Reinders J."/>
            <person name="Wagner Y."/>
            <person name="Joppich C."/>
            <person name="Zahedi R.P."/>
            <person name="Meyer H.E."/>
            <person name="Schoenfisch B."/>
            <person name="Perschil I."/>
            <person name="Chacinska A."/>
            <person name="Guiard B."/>
            <person name="Rehling P."/>
            <person name="Pfanner N."/>
            <person name="Meisinger C."/>
        </authorList>
    </citation>
    <scope>SUBCELLULAR LOCATION [LARGE SCALE ANALYSIS]</scope>
    <source>
        <strain>ATCC 76625 / YPH499</strain>
    </source>
</reference>
<reference key="8">
    <citation type="journal article" date="2012" name="Science">
        <title>Identification and functional expression of the mitochondrial pyruvate carrier.</title>
        <authorList>
            <person name="Herzig S."/>
            <person name="Raemy E."/>
            <person name="Montessuit S."/>
            <person name="Veuthey J.L."/>
            <person name="Zamboni N."/>
            <person name="Westermann B."/>
            <person name="Kunji E.R."/>
            <person name="Martinou J.C."/>
        </authorList>
    </citation>
    <scope>FUNCTION</scope>
    <scope>SUBCELLULAR LOCATION</scope>
    <scope>SUBUNIT</scope>
    <scope>DISRUPTION PHENOTYPE</scope>
</reference>
<reference key="9">
    <citation type="journal article" date="2012" name="Science">
        <title>A mitochondrial pyruvate carrier required for pyruvate uptake in yeast, Drosophila, and humans.</title>
        <authorList>
            <person name="Bricker D.K."/>
            <person name="Taylor E.B."/>
            <person name="Schell J.C."/>
            <person name="Orsak T."/>
            <person name="Boutron A."/>
            <person name="Chen Y.C."/>
            <person name="Cox J.E."/>
            <person name="Cardon C.M."/>
            <person name="Van Vranken J.G."/>
            <person name="Dephoure N."/>
            <person name="Redin C."/>
            <person name="Boudina S."/>
            <person name="Gygi S.P."/>
            <person name="Brivet M."/>
            <person name="Thummel C.S."/>
            <person name="Rutter J."/>
        </authorList>
    </citation>
    <scope>FUNCTION</scope>
    <scope>SUBCELLULAR LOCATION</scope>
    <scope>SUBUNIT</scope>
</reference>
<keyword id="KW-0472">Membrane</keyword>
<keyword id="KW-0496">Mitochondrion</keyword>
<keyword id="KW-0999">Mitochondrion inner membrane</keyword>
<keyword id="KW-1185">Reference proteome</keyword>
<keyword id="KW-0812">Transmembrane</keyword>
<keyword id="KW-1133">Transmembrane helix</keyword>
<keyword id="KW-0813">Transport</keyword>
<evidence type="ECO:0000255" key="1"/>
<evidence type="ECO:0000269" key="2">
    <source>
    </source>
</evidence>
<evidence type="ECO:0000269" key="3">
    <source>
    </source>
</evidence>
<evidence type="ECO:0000269" key="4">
    <source>
    </source>
</evidence>
<evidence type="ECO:0000269" key="5">
    <source>
    </source>
</evidence>
<evidence type="ECO:0000269" key="6">
    <source>
    </source>
</evidence>
<evidence type="ECO:0000303" key="7">
    <source>
    </source>
</evidence>
<evidence type="ECO:0000303" key="8">
    <source>
    </source>
</evidence>
<evidence type="ECO:0000303" key="9">
    <source>
    </source>
</evidence>
<evidence type="ECO:0000305" key="10"/>
<evidence type="ECO:0000312" key="11">
    <source>
        <dbReference type="SGD" id="S000003048"/>
    </source>
</evidence>
<comment type="function">
    <text evidence="5 6">Mediates the uptake of pyruvate into mitochondria.</text>
</comment>
<comment type="subunit">
    <text evidence="5 6">The functional 150 kDa pyruvate import complex is a heteromer of MPC1 and either MPC2 or MPC3.</text>
</comment>
<comment type="interaction">
    <interactant intactId="EBI-23845">
        <id>P53157</id>
    </interactant>
    <interactant intactId="EBI-24818">
        <id>P38857</id>
        <label>MPC2</label>
    </interactant>
    <organismsDiffer>false</organismsDiffer>
    <experiments>9</experiments>
</comment>
<comment type="interaction">
    <interactant intactId="EBI-23845">
        <id>P53157</id>
    </interactant>
    <interactant intactId="EBI-23568">
        <id>P53311</id>
        <label>MPC3</label>
    </interactant>
    <organismsDiffer>false</organismsDiffer>
    <experiments>5</experiments>
</comment>
<comment type="subcellular location">
    <subcellularLocation>
        <location evidence="2 4">Mitochondrion</location>
    </subcellularLocation>
    <subcellularLocation>
        <location evidence="5 6">Mitochondrion inner membrane</location>
        <topology evidence="1">Multi-pass membrane protein</topology>
    </subcellularLocation>
</comment>
<comment type="disruption phenotype">
    <text evidence="5">Grows more slowly in amino acid-free medium (SD).</text>
</comment>
<comment type="miscellaneous">
    <text evidence="3">Present with 396 molecules/cell in log phase SD medium.</text>
</comment>
<comment type="similarity">
    <text evidence="10">Belongs to the mitochondrial pyruvate carrier (MPC) (TC 2.A.105) family.</text>
</comment>
<accession>P53157</accession>
<accession>D6VU64</accession>
<protein>
    <recommendedName>
        <fullName evidence="8 9">Mitochondrial pyruvate carrier 1</fullName>
        <shortName evidence="8 9">MPC1</shortName>
    </recommendedName>
    <alternativeName>
        <fullName evidence="7">Protein FMP37</fullName>
    </alternativeName>
</protein>